<accession>P54361</accession>
<accession>O44436</accession>
<name>OAZ_DROME</name>
<reference key="1">
    <citation type="journal article" date="1996" name="Genetics">
        <title>Gutfeeling, a Drosophila gene encoding an antizyme-like protein, is required for late differentiation of neurons and muscles.</title>
        <authorList>
            <person name="Salzberg A."/>
            <person name="Golden K."/>
            <person name="Bodmer R."/>
            <person name="Bellen H.J."/>
        </authorList>
    </citation>
    <scope>NUCLEOTIDE SEQUENCE [MRNA]</scope>
    <source>
        <strain>Canton-S</strain>
    </source>
</reference>
<reference key="2">
    <citation type="journal article" date="1998" name="Mol. Cell. Biol.">
        <title>The Drosophila gene for antizyme requires ribosomal frameshifting for expression and contains an intronic gene for snRNP Sm D3 on the opposite strand.</title>
        <authorList>
            <person name="Ivanov I.P."/>
            <person name="Simin K."/>
            <person name="Letsou A."/>
            <person name="Atkins J.F."/>
            <person name="Gesteland R.F."/>
        </authorList>
    </citation>
    <scope>NUCLEOTIDE SEQUENCE [MRNA]</scope>
</reference>
<reference key="3">
    <citation type="journal article" date="2000" name="Science">
        <title>The genome sequence of Drosophila melanogaster.</title>
        <authorList>
            <person name="Adams M.D."/>
            <person name="Celniker S.E."/>
            <person name="Holt R.A."/>
            <person name="Evans C.A."/>
            <person name="Gocayne J.D."/>
            <person name="Amanatides P.G."/>
            <person name="Scherer S.E."/>
            <person name="Li P.W."/>
            <person name="Hoskins R.A."/>
            <person name="Galle R.F."/>
            <person name="George R.A."/>
            <person name="Lewis S.E."/>
            <person name="Richards S."/>
            <person name="Ashburner M."/>
            <person name="Henderson S.N."/>
            <person name="Sutton G.G."/>
            <person name="Wortman J.R."/>
            <person name="Yandell M.D."/>
            <person name="Zhang Q."/>
            <person name="Chen L.X."/>
            <person name="Brandon R.C."/>
            <person name="Rogers Y.-H.C."/>
            <person name="Blazej R.G."/>
            <person name="Champe M."/>
            <person name="Pfeiffer B.D."/>
            <person name="Wan K.H."/>
            <person name="Doyle C."/>
            <person name="Baxter E.G."/>
            <person name="Helt G."/>
            <person name="Nelson C.R."/>
            <person name="Miklos G.L.G."/>
            <person name="Abril J.F."/>
            <person name="Agbayani A."/>
            <person name="An H.-J."/>
            <person name="Andrews-Pfannkoch C."/>
            <person name="Baldwin D."/>
            <person name="Ballew R.M."/>
            <person name="Basu A."/>
            <person name="Baxendale J."/>
            <person name="Bayraktaroglu L."/>
            <person name="Beasley E.M."/>
            <person name="Beeson K.Y."/>
            <person name="Benos P.V."/>
            <person name="Berman B.P."/>
            <person name="Bhandari D."/>
            <person name="Bolshakov S."/>
            <person name="Borkova D."/>
            <person name="Botchan M.R."/>
            <person name="Bouck J."/>
            <person name="Brokstein P."/>
            <person name="Brottier P."/>
            <person name="Burtis K.C."/>
            <person name="Busam D.A."/>
            <person name="Butler H."/>
            <person name="Cadieu E."/>
            <person name="Center A."/>
            <person name="Chandra I."/>
            <person name="Cherry J.M."/>
            <person name="Cawley S."/>
            <person name="Dahlke C."/>
            <person name="Davenport L.B."/>
            <person name="Davies P."/>
            <person name="de Pablos B."/>
            <person name="Delcher A."/>
            <person name="Deng Z."/>
            <person name="Mays A.D."/>
            <person name="Dew I."/>
            <person name="Dietz S.M."/>
            <person name="Dodson K."/>
            <person name="Doup L.E."/>
            <person name="Downes M."/>
            <person name="Dugan-Rocha S."/>
            <person name="Dunkov B.C."/>
            <person name="Dunn P."/>
            <person name="Durbin K.J."/>
            <person name="Evangelista C.C."/>
            <person name="Ferraz C."/>
            <person name="Ferriera S."/>
            <person name="Fleischmann W."/>
            <person name="Fosler C."/>
            <person name="Gabrielian A.E."/>
            <person name="Garg N.S."/>
            <person name="Gelbart W.M."/>
            <person name="Glasser K."/>
            <person name="Glodek A."/>
            <person name="Gong F."/>
            <person name="Gorrell J.H."/>
            <person name="Gu Z."/>
            <person name="Guan P."/>
            <person name="Harris M."/>
            <person name="Harris N.L."/>
            <person name="Harvey D.A."/>
            <person name="Heiman T.J."/>
            <person name="Hernandez J.R."/>
            <person name="Houck J."/>
            <person name="Hostin D."/>
            <person name="Houston K.A."/>
            <person name="Howland T.J."/>
            <person name="Wei M.-H."/>
            <person name="Ibegwam C."/>
            <person name="Jalali M."/>
            <person name="Kalush F."/>
            <person name="Karpen G.H."/>
            <person name="Ke Z."/>
            <person name="Kennison J.A."/>
            <person name="Ketchum K.A."/>
            <person name="Kimmel B.E."/>
            <person name="Kodira C.D."/>
            <person name="Kraft C.L."/>
            <person name="Kravitz S."/>
            <person name="Kulp D."/>
            <person name="Lai Z."/>
            <person name="Lasko P."/>
            <person name="Lei Y."/>
            <person name="Levitsky A.A."/>
            <person name="Li J.H."/>
            <person name="Li Z."/>
            <person name="Liang Y."/>
            <person name="Lin X."/>
            <person name="Liu X."/>
            <person name="Mattei B."/>
            <person name="McIntosh T.C."/>
            <person name="McLeod M.P."/>
            <person name="McPherson D."/>
            <person name="Merkulov G."/>
            <person name="Milshina N.V."/>
            <person name="Mobarry C."/>
            <person name="Morris J."/>
            <person name="Moshrefi A."/>
            <person name="Mount S.M."/>
            <person name="Moy M."/>
            <person name="Murphy B."/>
            <person name="Murphy L."/>
            <person name="Muzny D.M."/>
            <person name="Nelson D.L."/>
            <person name="Nelson D.R."/>
            <person name="Nelson K.A."/>
            <person name="Nixon K."/>
            <person name="Nusskern D.R."/>
            <person name="Pacleb J.M."/>
            <person name="Palazzolo M."/>
            <person name="Pittman G.S."/>
            <person name="Pan S."/>
            <person name="Pollard J."/>
            <person name="Puri V."/>
            <person name="Reese M.G."/>
            <person name="Reinert K."/>
            <person name="Remington K."/>
            <person name="Saunders R.D.C."/>
            <person name="Scheeler F."/>
            <person name="Shen H."/>
            <person name="Shue B.C."/>
            <person name="Siden-Kiamos I."/>
            <person name="Simpson M."/>
            <person name="Skupski M.P."/>
            <person name="Smith T.J."/>
            <person name="Spier E."/>
            <person name="Spradling A.C."/>
            <person name="Stapleton M."/>
            <person name="Strong R."/>
            <person name="Sun E."/>
            <person name="Svirskas R."/>
            <person name="Tector C."/>
            <person name="Turner R."/>
            <person name="Venter E."/>
            <person name="Wang A.H."/>
            <person name="Wang X."/>
            <person name="Wang Z.-Y."/>
            <person name="Wassarman D.A."/>
            <person name="Weinstock G.M."/>
            <person name="Weissenbach J."/>
            <person name="Williams S.M."/>
            <person name="Woodage T."/>
            <person name="Worley K.C."/>
            <person name="Wu D."/>
            <person name="Yang S."/>
            <person name="Yao Q.A."/>
            <person name="Ye J."/>
            <person name="Yeh R.-F."/>
            <person name="Zaveri J.S."/>
            <person name="Zhan M."/>
            <person name="Zhang G."/>
            <person name="Zhao Q."/>
            <person name="Zheng L."/>
            <person name="Zheng X.H."/>
            <person name="Zhong F.N."/>
            <person name="Zhong W."/>
            <person name="Zhou X."/>
            <person name="Zhu S.C."/>
            <person name="Zhu X."/>
            <person name="Smith H.O."/>
            <person name="Gibbs R.A."/>
            <person name="Myers E.W."/>
            <person name="Rubin G.M."/>
            <person name="Venter J.C."/>
        </authorList>
    </citation>
    <scope>NUCLEOTIDE SEQUENCE [LARGE SCALE GENOMIC DNA]</scope>
    <source>
        <strain>Berkeley</strain>
    </source>
</reference>
<reference key="4">
    <citation type="journal article" date="2002" name="Genome Biol.">
        <title>Annotation of the Drosophila melanogaster euchromatic genome: a systematic review.</title>
        <authorList>
            <person name="Misra S."/>
            <person name="Crosby M.A."/>
            <person name="Mungall C.J."/>
            <person name="Matthews B.B."/>
            <person name="Campbell K.S."/>
            <person name="Hradecky P."/>
            <person name="Huang Y."/>
            <person name="Kaminker J.S."/>
            <person name="Millburn G.H."/>
            <person name="Prochnik S.E."/>
            <person name="Smith C.D."/>
            <person name="Tupy J.L."/>
            <person name="Whitfield E.J."/>
            <person name="Bayraktaroglu L."/>
            <person name="Berman B.P."/>
            <person name="Bettencourt B.R."/>
            <person name="Celniker S.E."/>
            <person name="de Grey A.D.N.J."/>
            <person name="Drysdale R.A."/>
            <person name="Harris N.L."/>
            <person name="Richter J."/>
            <person name="Russo S."/>
            <person name="Schroeder A.J."/>
            <person name="Shu S.Q."/>
            <person name="Stapleton M."/>
            <person name="Yamada C."/>
            <person name="Ashburner M."/>
            <person name="Gelbart W.M."/>
            <person name="Rubin G.M."/>
            <person name="Lewis S.E."/>
        </authorList>
    </citation>
    <scope>GENOME REANNOTATION</scope>
    <source>
        <strain>Berkeley</strain>
    </source>
</reference>
<sequence length="254" mass="28283">MPSNMNNKLDPVFSSGFVRREFNDSGIADGKLRTISTSSCATTMSSESYRISLGVGPLWWSDVPVHHRTDHDRASLLTGYSRKSSVDSAGGSLYEASSRASSLSSSQSDCSDLESQPDIHSLCSDDDCQEVLRQILQHDQPVQITIKLHVTEDQYTNWNTILNPVNNLLYVALPKDLPPAGSKQTFISLLEFAEEKLEVDGIVMVMPKDQPDRARLIEAFLFMGFEPLSRKAPQAPPAAINDNENYYFLYSIEE</sequence>
<feature type="chain" id="PRO_0000220862" description="Ornithine decarboxylase antizyme">
    <location>
        <begin position="1"/>
        <end position="254"/>
    </location>
</feature>
<evidence type="ECO:0000250" key="1">
    <source>
        <dbReference type="UniProtKB" id="P54368"/>
    </source>
</evidence>
<evidence type="ECO:0000269" key="2">
    <source>
    </source>
</evidence>
<evidence type="ECO:0000305" key="3"/>
<organism>
    <name type="scientific">Drosophila melanogaster</name>
    <name type="common">Fruit fly</name>
    <dbReference type="NCBI Taxonomy" id="7227"/>
    <lineage>
        <taxon>Eukaryota</taxon>
        <taxon>Metazoa</taxon>
        <taxon>Ecdysozoa</taxon>
        <taxon>Arthropoda</taxon>
        <taxon>Hexapoda</taxon>
        <taxon>Insecta</taxon>
        <taxon>Pterygota</taxon>
        <taxon>Neoptera</taxon>
        <taxon>Endopterygota</taxon>
        <taxon>Diptera</taxon>
        <taxon>Brachycera</taxon>
        <taxon>Muscomorpha</taxon>
        <taxon>Ephydroidea</taxon>
        <taxon>Drosophilidae</taxon>
        <taxon>Drosophila</taxon>
        <taxon>Sophophora</taxon>
    </lineage>
</organism>
<comment type="function">
    <text evidence="1 2">Ornithine decarboxylase (ODC) antizyme protein that negatively regulates ODC activity and intracellular polyamine biosynthesis and uptake in response to increased intracellular polyamine levels. Binds to ODC monomers, inhibiting the assembly of the functional ODC homodimer, and targets the monomers for ubiquitin-independent proteolytic destruction by the 26S proteasome (By similarity). Required for cellular differentiation in neuronal and myogenic lineages during embryonic development (PubMed:8878684).</text>
</comment>
<comment type="subunit">
    <text evidence="1">Interacts with ODC1 and thereby sterically blocks ODC homodimerization.</text>
</comment>
<comment type="alternative products">
    <event type="ribosomal frameshifting"/>
    <isoform>
        <id>P54361-1</id>
        <name>1</name>
        <sequence type="displayed"/>
    </isoform>
    <text>A ribosomal frameshift occurs between the codons for Ser-61 and Asp-62. An autoregulatory mechanism enables modulation of frameshifting according to the cellular concentration of polyamines.</text>
</comment>
<comment type="developmental stage">
    <text>Expressed in all stages of embryonic and larval development as well as in pupae and adults.</text>
</comment>
<comment type="similarity">
    <text evidence="3">Belongs to the ODC antizyme family.</text>
</comment>
<keyword id="KW-0217">Developmental protein</keyword>
<keyword id="KW-1185">Reference proteome</keyword>
<keyword id="KW-0688">Ribosomal frameshifting</keyword>
<protein>
    <recommendedName>
        <fullName>Ornithine decarboxylase antizyme</fullName>
        <shortName>ODC-Az</shortName>
    </recommendedName>
    <alternativeName>
        <fullName>Protein gutfeeling</fullName>
    </alternativeName>
</protein>
<gene>
    <name type="primary">Oda</name>
    <name type="synonym">guf</name>
    <name type="ORF">CG16747</name>
</gene>
<proteinExistence type="evidence at transcript level"/>
<dbReference type="EMBL" id="U29529">
    <property type="protein sequence ID" value="AAB49330.1"/>
    <property type="status" value="ALT_SEQ"/>
    <property type="molecule type" value="mRNA"/>
</dbReference>
<dbReference type="EMBL" id="AF038597">
    <property type="protein sequence ID" value="AAC97538.1"/>
    <property type="molecule type" value="mRNA"/>
</dbReference>
<dbReference type="EMBL" id="AE013599">
    <property type="protein sequence ID" value="AAF58569.2"/>
    <property type="molecule type" value="Genomic_DNA"/>
</dbReference>
<dbReference type="PIR" id="S72228">
    <property type="entry name" value="S72228"/>
</dbReference>
<dbReference type="RefSeq" id="NP_725103.1">
    <molecule id="P54361-1"/>
    <property type="nucleotide sequence ID" value="NM_165863.3"/>
</dbReference>
<dbReference type="SMR" id="P54361"/>
<dbReference type="BioGRID" id="62088">
    <property type="interactions" value="53"/>
</dbReference>
<dbReference type="FunCoup" id="P54361">
    <property type="interactions" value="984"/>
</dbReference>
<dbReference type="IntAct" id="P54361">
    <property type="interactions" value="4"/>
</dbReference>
<dbReference type="STRING" id="7227.FBpp0087122"/>
<dbReference type="PaxDb" id="7227-FBpp0087122"/>
<dbReference type="EnsemblMetazoa" id="FBtr0088013">
    <molecule id="P54361-1"/>
    <property type="protein sequence ID" value="FBpp0087121"/>
    <property type="gene ID" value="FBgn0014184"/>
</dbReference>
<dbReference type="GeneID" id="36307"/>
<dbReference type="KEGG" id="dme:Dmel_CG16747"/>
<dbReference type="AGR" id="FB:FBgn0014184"/>
<dbReference type="CTD" id="36307"/>
<dbReference type="FlyBase" id="FBgn0014184">
    <property type="gene designation" value="Oda"/>
</dbReference>
<dbReference type="VEuPathDB" id="VectorBase:FBgn0014184"/>
<dbReference type="eggNOG" id="KOG4387">
    <property type="taxonomic scope" value="Eukaryota"/>
</dbReference>
<dbReference type="InParanoid" id="P54361"/>
<dbReference type="OrthoDB" id="5959761at2759"/>
<dbReference type="PhylomeDB" id="P54361"/>
<dbReference type="Reactome" id="R-DME-350562">
    <property type="pathway name" value="Regulation of ornithine decarboxylase (ODC)"/>
</dbReference>
<dbReference type="SignaLink" id="P54361"/>
<dbReference type="BioGRID-ORCS" id="36307">
    <property type="hits" value="1 hit in 3 CRISPR screens"/>
</dbReference>
<dbReference type="ChiTaRS" id="Oda">
    <property type="organism name" value="fly"/>
</dbReference>
<dbReference type="GenomeRNAi" id="36307"/>
<dbReference type="PRO" id="PR:P54361"/>
<dbReference type="Proteomes" id="UP000000803">
    <property type="component" value="Chromosome 2R"/>
</dbReference>
<dbReference type="Bgee" id="FBgn0014184">
    <property type="expression patterns" value="Expressed in adult brain perineurial glial cell (Drosophila) in brain and 283 other cell types or tissues"/>
</dbReference>
<dbReference type="ExpressionAtlas" id="P54361">
    <property type="expression patterns" value="baseline and differential"/>
</dbReference>
<dbReference type="GO" id="GO:0005737">
    <property type="term" value="C:cytoplasm"/>
    <property type="evidence" value="ECO:0000318"/>
    <property type="project" value="GO_Central"/>
</dbReference>
<dbReference type="GO" id="GO:0005829">
    <property type="term" value="C:cytosol"/>
    <property type="evidence" value="ECO:0007005"/>
    <property type="project" value="FlyBase"/>
</dbReference>
<dbReference type="GO" id="GO:0005654">
    <property type="term" value="C:nucleoplasm"/>
    <property type="evidence" value="ECO:0007005"/>
    <property type="project" value="FlyBase"/>
</dbReference>
<dbReference type="GO" id="GO:0005634">
    <property type="term" value="C:nucleus"/>
    <property type="evidence" value="ECO:0000318"/>
    <property type="project" value="GO_Central"/>
</dbReference>
<dbReference type="GO" id="GO:0008073">
    <property type="term" value="F:ornithine decarboxylase inhibitor activity"/>
    <property type="evidence" value="ECO:0000250"/>
    <property type="project" value="FlyBase"/>
</dbReference>
<dbReference type="GO" id="GO:0045732">
    <property type="term" value="P:positive regulation of protein catabolic process"/>
    <property type="evidence" value="ECO:0000318"/>
    <property type="project" value="GO_Central"/>
</dbReference>
<dbReference type="GO" id="GO:0075523">
    <property type="term" value="P:viral translational frameshifting"/>
    <property type="evidence" value="ECO:0007669"/>
    <property type="project" value="UniProtKB-KW"/>
</dbReference>
<dbReference type="FunFam" id="3.40.630.60:FF:000005">
    <property type="entry name" value="Ornithine decarboxylase antizyme, isoform B"/>
    <property type="match status" value="1"/>
</dbReference>
<dbReference type="Gene3D" id="3.40.630.60">
    <property type="match status" value="1"/>
</dbReference>
<dbReference type="InterPro" id="IPR016181">
    <property type="entry name" value="Acyl_CoA_acyltransferase"/>
</dbReference>
<dbReference type="InterPro" id="IPR002993">
    <property type="entry name" value="ODC_AZ"/>
</dbReference>
<dbReference type="InterPro" id="IPR038581">
    <property type="entry name" value="ODC_AZ_sf"/>
</dbReference>
<dbReference type="PANTHER" id="PTHR10279">
    <property type="entry name" value="ORNITHINE DECARBOXYLASE ANTIZYME"/>
    <property type="match status" value="1"/>
</dbReference>
<dbReference type="PANTHER" id="PTHR10279:SF10">
    <property type="entry name" value="ORNITHINE DECARBOXYLASE ANTIZYME"/>
    <property type="match status" value="1"/>
</dbReference>
<dbReference type="Pfam" id="PF02100">
    <property type="entry name" value="ODC_AZ"/>
    <property type="match status" value="1"/>
</dbReference>
<dbReference type="SUPFAM" id="SSF55729">
    <property type="entry name" value="Acyl-CoA N-acyltransferases (Nat)"/>
    <property type="match status" value="1"/>
</dbReference>
<dbReference type="PROSITE" id="PS01337">
    <property type="entry name" value="ODC_AZ"/>
    <property type="match status" value="1"/>
</dbReference>